<proteinExistence type="uncertain"/>
<accession>P39355</accession>
<accession>P76814</accession>
<sequence>MLADELTIGPIRAVPMDITPKYVGIASGLMNAGSAVADIISPIAFGIIIDKTGNWSLPFYGSVALLVIGIFLTFFMRPDKSL</sequence>
<name>YJHE_ECOLI</name>
<feature type="chain" id="PRO_0000169782" description="Putative uncharacterized protein YjhE">
    <location>
        <begin position="1"/>
        <end position="82"/>
    </location>
</feature>
<feature type="transmembrane region" description="Helical" evidence="1">
    <location>
        <begin position="29"/>
        <end position="49"/>
    </location>
</feature>
<feature type="transmembrane region" description="Helical" evidence="1">
    <location>
        <begin position="55"/>
        <end position="75"/>
    </location>
</feature>
<dbReference type="EMBL" id="U14003">
    <property type="protein sequence ID" value="AAA97178.1"/>
    <property type="status" value="ALT_INIT"/>
    <property type="molecule type" value="Genomic_DNA"/>
</dbReference>
<dbReference type="EMBL" id="U00096">
    <property type="status" value="NOT_ANNOTATED_CDS"/>
    <property type="molecule type" value="Genomic_DNA"/>
</dbReference>
<dbReference type="PIR" id="S56507">
    <property type="entry name" value="S56507"/>
</dbReference>
<dbReference type="SMR" id="P39355"/>
<dbReference type="FunCoup" id="P39355">
    <property type="interactions" value="43"/>
</dbReference>
<dbReference type="PATRIC" id="fig|83333.103.peg.593"/>
<dbReference type="EchoBASE" id="EB2435"/>
<dbReference type="InParanoid" id="P39355"/>
<dbReference type="Proteomes" id="UP000000625">
    <property type="component" value="Chromosome"/>
</dbReference>
<dbReference type="GO" id="GO:0005886">
    <property type="term" value="C:plasma membrane"/>
    <property type="evidence" value="ECO:0007669"/>
    <property type="project" value="UniProtKB-SubCell"/>
</dbReference>
<dbReference type="GO" id="GO:0022857">
    <property type="term" value="F:transmembrane transporter activity"/>
    <property type="evidence" value="ECO:0007669"/>
    <property type="project" value="InterPro"/>
</dbReference>
<dbReference type="Gene3D" id="1.20.1250.20">
    <property type="entry name" value="MFS general substrate transporter like domains"/>
    <property type="match status" value="1"/>
</dbReference>
<dbReference type="InterPro" id="IPR011701">
    <property type="entry name" value="MFS"/>
</dbReference>
<dbReference type="InterPro" id="IPR020846">
    <property type="entry name" value="MFS_dom"/>
</dbReference>
<dbReference type="InterPro" id="IPR036259">
    <property type="entry name" value="MFS_trans_sf"/>
</dbReference>
<dbReference type="Pfam" id="PF07690">
    <property type="entry name" value="MFS_1"/>
    <property type="match status" value="1"/>
</dbReference>
<dbReference type="SUPFAM" id="SSF103473">
    <property type="entry name" value="MFS general substrate transporter"/>
    <property type="match status" value="1"/>
</dbReference>
<dbReference type="PROSITE" id="PS50850">
    <property type="entry name" value="MFS"/>
    <property type="match status" value="1"/>
</dbReference>
<organism>
    <name type="scientific">Escherichia coli (strain K12)</name>
    <dbReference type="NCBI Taxonomy" id="83333"/>
    <lineage>
        <taxon>Bacteria</taxon>
        <taxon>Pseudomonadati</taxon>
        <taxon>Pseudomonadota</taxon>
        <taxon>Gammaproteobacteria</taxon>
        <taxon>Enterobacterales</taxon>
        <taxon>Enterobacteriaceae</taxon>
        <taxon>Escherichia</taxon>
    </lineage>
</organism>
<comment type="subcellular location">
    <subcellularLocation>
        <location evidence="2">Cell membrane</location>
        <topology evidence="2">Multi-pass membrane protein</topology>
    </subcellularLocation>
</comment>
<comment type="caution">
    <text evidence="2">Could be the product of a pseudogene.</text>
</comment>
<comment type="sequence caution" evidence="2">
    <conflict type="erroneous initiation">
        <sequence resource="EMBL-CDS" id="AAA97178"/>
    </conflict>
</comment>
<protein>
    <recommendedName>
        <fullName>Putative uncharacterized protein YjhE</fullName>
    </recommendedName>
</protein>
<evidence type="ECO:0000255" key="1"/>
<evidence type="ECO:0000305" key="2"/>
<gene>
    <name type="primary">yjhE</name>
    <name type="ordered locus">b4282</name>
</gene>
<reference key="1">
    <citation type="journal article" date="1995" name="Nucleic Acids Res.">
        <title>Analysis of the Escherichia coli genome VI: DNA sequence of the region from 92.8 through 100 minutes.</title>
        <authorList>
            <person name="Burland V.D."/>
            <person name="Plunkett G. III"/>
            <person name="Sofia H.J."/>
            <person name="Daniels D.L."/>
            <person name="Blattner F.R."/>
        </authorList>
    </citation>
    <scope>NUCLEOTIDE SEQUENCE [LARGE SCALE GENOMIC DNA]</scope>
    <source>
        <strain>K12 / MG1655 / ATCC 47076</strain>
    </source>
</reference>
<reference key="2">
    <citation type="journal article" date="1997" name="Science">
        <title>The complete genome sequence of Escherichia coli K-12.</title>
        <authorList>
            <person name="Blattner F.R."/>
            <person name="Plunkett G. III"/>
            <person name="Bloch C.A."/>
            <person name="Perna N.T."/>
            <person name="Burland V."/>
            <person name="Riley M."/>
            <person name="Collado-Vides J."/>
            <person name="Glasner J.D."/>
            <person name="Rode C.K."/>
            <person name="Mayhew G.F."/>
            <person name="Gregor J."/>
            <person name="Davis N.W."/>
            <person name="Kirkpatrick H.A."/>
            <person name="Goeden M.A."/>
            <person name="Rose D.J."/>
            <person name="Mau B."/>
            <person name="Shao Y."/>
        </authorList>
    </citation>
    <scope>NUCLEOTIDE SEQUENCE [LARGE SCALE GENOMIC DNA]</scope>
    <source>
        <strain>K12 / MG1655 / ATCC 47076</strain>
    </source>
</reference>
<keyword id="KW-1003">Cell membrane</keyword>
<keyword id="KW-0472">Membrane</keyword>
<keyword id="KW-1185">Reference proteome</keyword>
<keyword id="KW-0812">Transmembrane</keyword>
<keyword id="KW-1133">Transmembrane helix</keyword>